<accession>A8MUV8</accession>
<protein>
    <recommendedName>
        <fullName>Zinc finger protein 727</fullName>
    </recommendedName>
</protein>
<gene>
    <name type="primary">ZNF727</name>
    <name type="synonym">ZNF727P</name>
</gene>
<comment type="function">
    <text evidence="1">May be involved in transcriptional regulation.</text>
</comment>
<comment type="subcellular location">
    <subcellularLocation>
        <location evidence="1">Nucleus</location>
    </subcellularLocation>
</comment>
<comment type="similarity">
    <text evidence="4">Belongs to the krueppel C2H2-type zinc-finger protein family.</text>
</comment>
<feature type="chain" id="PRO_0000346157" description="Zinc finger protein 727">
    <location>
        <begin position="1"/>
        <end position="499"/>
    </location>
</feature>
<feature type="domain" description="KRAB" evidence="3">
    <location>
        <begin position="4"/>
        <end position="75"/>
    </location>
</feature>
<feature type="zinc finger region" description="C2H2-type 1; degenerate" evidence="2">
    <location>
        <begin position="143"/>
        <end position="167"/>
    </location>
</feature>
<feature type="zinc finger region" description="C2H2-type 2" evidence="2">
    <location>
        <begin position="200"/>
        <end position="222"/>
    </location>
</feature>
<feature type="zinc finger region" description="C2H2-type 3" evidence="2">
    <location>
        <begin position="228"/>
        <end position="250"/>
    </location>
</feature>
<feature type="zinc finger region" description="C2H2-type 4" evidence="2">
    <location>
        <begin position="256"/>
        <end position="278"/>
    </location>
</feature>
<feature type="zinc finger region" description="C2H2-type 5" evidence="2">
    <location>
        <begin position="284"/>
        <end position="306"/>
    </location>
</feature>
<feature type="zinc finger region" description="C2H2-type 6" evidence="2">
    <location>
        <begin position="312"/>
        <end position="334"/>
    </location>
</feature>
<feature type="zinc finger region" description="C2H2-type 7" evidence="2">
    <location>
        <begin position="340"/>
        <end position="362"/>
    </location>
</feature>
<feature type="zinc finger region" description="C2H2-type 8" evidence="2">
    <location>
        <begin position="368"/>
        <end position="390"/>
    </location>
</feature>
<feature type="zinc finger region" description="C2H2-type 9" evidence="2">
    <location>
        <begin position="396"/>
        <end position="418"/>
    </location>
</feature>
<feature type="zinc finger region" description="C2H2-type 10" evidence="2">
    <location>
        <begin position="424"/>
        <end position="446"/>
    </location>
</feature>
<feature type="zinc finger region" description="C2H2-type 11" evidence="2">
    <location>
        <begin position="452"/>
        <end position="474"/>
    </location>
</feature>
<reference key="1">
    <citation type="journal article" date="2003" name="Nature">
        <title>The DNA sequence of human chromosome 7.</title>
        <authorList>
            <person name="Hillier L.W."/>
            <person name="Fulton R.S."/>
            <person name="Fulton L.A."/>
            <person name="Graves T.A."/>
            <person name="Pepin K.H."/>
            <person name="Wagner-McPherson C."/>
            <person name="Layman D."/>
            <person name="Maas J."/>
            <person name="Jaeger S."/>
            <person name="Walker R."/>
            <person name="Wylie K."/>
            <person name="Sekhon M."/>
            <person name="Becker M.C."/>
            <person name="O'Laughlin M.D."/>
            <person name="Schaller M.E."/>
            <person name="Fewell G.A."/>
            <person name="Delehaunty K.D."/>
            <person name="Miner T.L."/>
            <person name="Nash W.E."/>
            <person name="Cordes M."/>
            <person name="Du H."/>
            <person name="Sun H."/>
            <person name="Edwards J."/>
            <person name="Bradshaw-Cordum H."/>
            <person name="Ali J."/>
            <person name="Andrews S."/>
            <person name="Isak A."/>
            <person name="Vanbrunt A."/>
            <person name="Nguyen C."/>
            <person name="Du F."/>
            <person name="Lamar B."/>
            <person name="Courtney L."/>
            <person name="Kalicki J."/>
            <person name="Ozersky P."/>
            <person name="Bielicki L."/>
            <person name="Scott K."/>
            <person name="Holmes A."/>
            <person name="Harkins R."/>
            <person name="Harris A."/>
            <person name="Strong C.M."/>
            <person name="Hou S."/>
            <person name="Tomlinson C."/>
            <person name="Dauphin-Kohlberg S."/>
            <person name="Kozlowicz-Reilly A."/>
            <person name="Leonard S."/>
            <person name="Rohlfing T."/>
            <person name="Rock S.M."/>
            <person name="Tin-Wollam A.-M."/>
            <person name="Abbott A."/>
            <person name="Minx P."/>
            <person name="Maupin R."/>
            <person name="Strowmatt C."/>
            <person name="Latreille P."/>
            <person name="Miller N."/>
            <person name="Johnson D."/>
            <person name="Murray J."/>
            <person name="Woessner J.P."/>
            <person name="Wendl M.C."/>
            <person name="Yang S.-P."/>
            <person name="Schultz B.R."/>
            <person name="Wallis J.W."/>
            <person name="Spieth J."/>
            <person name="Bieri T.A."/>
            <person name="Nelson J.O."/>
            <person name="Berkowicz N."/>
            <person name="Wohldmann P.E."/>
            <person name="Cook L.L."/>
            <person name="Hickenbotham M.T."/>
            <person name="Eldred J."/>
            <person name="Williams D."/>
            <person name="Bedell J.A."/>
            <person name="Mardis E.R."/>
            <person name="Clifton S.W."/>
            <person name="Chissoe S.L."/>
            <person name="Marra M.A."/>
            <person name="Raymond C."/>
            <person name="Haugen E."/>
            <person name="Gillett W."/>
            <person name="Zhou Y."/>
            <person name="James R."/>
            <person name="Phelps K."/>
            <person name="Iadanoto S."/>
            <person name="Bubb K."/>
            <person name="Simms E."/>
            <person name="Levy R."/>
            <person name="Clendenning J."/>
            <person name="Kaul R."/>
            <person name="Kent W.J."/>
            <person name="Furey T.S."/>
            <person name="Baertsch R.A."/>
            <person name="Brent M.R."/>
            <person name="Keibler E."/>
            <person name="Flicek P."/>
            <person name="Bork P."/>
            <person name="Suyama M."/>
            <person name="Bailey J.A."/>
            <person name="Portnoy M.E."/>
            <person name="Torrents D."/>
            <person name="Chinwalla A.T."/>
            <person name="Gish W.R."/>
            <person name="Eddy S.R."/>
            <person name="McPherson J.D."/>
            <person name="Olson M.V."/>
            <person name="Eichler E.E."/>
            <person name="Green E.D."/>
            <person name="Waterston R.H."/>
            <person name="Wilson R.K."/>
        </authorList>
    </citation>
    <scope>NUCLEOTIDE SEQUENCE [LARGE SCALE GENOMIC DNA]</scope>
</reference>
<organism>
    <name type="scientific">Homo sapiens</name>
    <name type="common">Human</name>
    <dbReference type="NCBI Taxonomy" id="9606"/>
    <lineage>
        <taxon>Eukaryota</taxon>
        <taxon>Metazoa</taxon>
        <taxon>Chordata</taxon>
        <taxon>Craniata</taxon>
        <taxon>Vertebrata</taxon>
        <taxon>Euteleostomi</taxon>
        <taxon>Mammalia</taxon>
        <taxon>Eutheria</taxon>
        <taxon>Euarchontoglires</taxon>
        <taxon>Primates</taxon>
        <taxon>Haplorrhini</taxon>
        <taxon>Catarrhini</taxon>
        <taxon>Hominidae</taxon>
        <taxon>Homo</taxon>
    </lineage>
</organism>
<proteinExistence type="evidence at protein level"/>
<keyword id="KW-0238">DNA-binding</keyword>
<keyword id="KW-0479">Metal-binding</keyword>
<keyword id="KW-0539">Nucleus</keyword>
<keyword id="KW-1267">Proteomics identification</keyword>
<keyword id="KW-1185">Reference proteome</keyword>
<keyword id="KW-0677">Repeat</keyword>
<keyword id="KW-0804">Transcription</keyword>
<keyword id="KW-0805">Transcription regulation</keyword>
<keyword id="KW-0862">Zinc</keyword>
<keyword id="KW-0863">Zinc-finger</keyword>
<sequence>MRVLTFRDVAVEFSPEEWECLDSAQQRLYRDVMLENYGNLFSLGLAIFKPDLITYLEQRKEPWNARRQKTVAKHPAGSLHFTAEILLEHDINDSFQKVILRKSGSCDLNTLRLKKDYQRVGNCKGQKSSYNGIHQCLSATRSKTCQYNKCGKAFGLCSIFTEHKKIFSREKCYKCEECGKDCRLSDFTIQKRIHTADRSYKCEECGKACKKFSNLTEHNRVHTGKKPYKCEECGKTFTCSSALTKHKRNHTGDRPYKCEECHKAFRCCSDLTKHKRIHTGEKPYKCKECHKAFRCCSDLTKHKRIHTGEKPYKCNECGKAFMWISALSQHNRIHTGEKPYICEECGKAFTYSSTLISHKRIHMELRPYKCEECGKTFKWFSDLTNHKRIHTGEKPYKCEECGKSFTCSSNLIKHKRIHMEVRPYKCEECGKTFKWFPDLTNHKRIHTGEKPYKCEECGKTFTCSSSLIKHKRSHTGDRPTSAKNVAKPLGGSQTLLNIR</sequence>
<name>ZN727_HUMAN</name>
<evidence type="ECO:0000250" key="1"/>
<evidence type="ECO:0000255" key="2">
    <source>
        <dbReference type="PROSITE-ProRule" id="PRU00042"/>
    </source>
</evidence>
<evidence type="ECO:0000255" key="3">
    <source>
        <dbReference type="PROSITE-ProRule" id="PRU00119"/>
    </source>
</evidence>
<evidence type="ECO:0000305" key="4"/>
<dbReference type="EMBL" id="AC115220">
    <property type="status" value="NOT_ANNOTATED_CDS"/>
    <property type="molecule type" value="Genomic_DNA"/>
</dbReference>
<dbReference type="CCDS" id="CCDS55113.1"/>
<dbReference type="RefSeq" id="NP_001152994.1">
    <property type="nucleotide sequence ID" value="NM_001159522.3"/>
</dbReference>
<dbReference type="SMR" id="A8MUV8"/>
<dbReference type="BioGRID" id="138203">
    <property type="interactions" value="3"/>
</dbReference>
<dbReference type="FunCoup" id="A8MUV8">
    <property type="interactions" value="1"/>
</dbReference>
<dbReference type="STRING" id="9606.ENSP00000485448"/>
<dbReference type="GlyGen" id="A8MUV8">
    <property type="glycosylation" value="3 sites, 1 N-linked glycan (2 sites), 1 O-linked glycan (1 site)"/>
</dbReference>
<dbReference type="iPTMnet" id="A8MUV8"/>
<dbReference type="PhosphoSitePlus" id="A8MUV8"/>
<dbReference type="BioMuta" id="ZNF727"/>
<dbReference type="jPOST" id="A8MUV8"/>
<dbReference type="MassIVE" id="A8MUV8"/>
<dbReference type="PaxDb" id="9606-ENSP00000485448"/>
<dbReference type="PeptideAtlas" id="A8MUV8"/>
<dbReference type="ProteomicsDB" id="2136"/>
<dbReference type="DNASU" id="442319"/>
<dbReference type="Ensembl" id="ENST00000456806.3">
    <property type="protein sequence ID" value="ENSP00000485448.1"/>
    <property type="gene ID" value="ENSG00000214652.7"/>
</dbReference>
<dbReference type="GeneID" id="442319"/>
<dbReference type="KEGG" id="hsa:442319"/>
<dbReference type="MANE-Select" id="ENST00000456806.3">
    <property type="protein sequence ID" value="ENSP00000485448.1"/>
    <property type="RefSeq nucleotide sequence ID" value="NM_001159522.3"/>
    <property type="RefSeq protein sequence ID" value="NP_001152994.1"/>
</dbReference>
<dbReference type="UCSC" id="uc011kdm.2">
    <property type="organism name" value="human"/>
</dbReference>
<dbReference type="AGR" id="HGNC:22785"/>
<dbReference type="CTD" id="442319"/>
<dbReference type="DisGeNET" id="442319"/>
<dbReference type="GeneCards" id="ZNF727"/>
<dbReference type="HGNC" id="HGNC:22785">
    <property type="gene designation" value="ZNF727"/>
</dbReference>
<dbReference type="HPA" id="ENSG00000214652">
    <property type="expression patterns" value="Low tissue specificity"/>
</dbReference>
<dbReference type="neXtProt" id="NX_A8MUV8"/>
<dbReference type="PharmGKB" id="PA162410231"/>
<dbReference type="VEuPathDB" id="HostDB:ENSG00000214652"/>
<dbReference type="eggNOG" id="KOG1721">
    <property type="taxonomic scope" value="Eukaryota"/>
</dbReference>
<dbReference type="GeneTree" id="ENSGT00940000154251"/>
<dbReference type="HOGENOM" id="CLU_002678_44_0_1"/>
<dbReference type="InParanoid" id="A8MUV8"/>
<dbReference type="OMA" id="DRCYKCE"/>
<dbReference type="OrthoDB" id="1095242at2759"/>
<dbReference type="PAN-GO" id="A8MUV8">
    <property type="GO annotations" value="3 GO annotations based on evolutionary models"/>
</dbReference>
<dbReference type="PhylomeDB" id="A8MUV8"/>
<dbReference type="TreeFam" id="TF342117"/>
<dbReference type="PathwayCommons" id="A8MUV8"/>
<dbReference type="Reactome" id="R-HSA-212436">
    <property type="pathway name" value="Generic Transcription Pathway"/>
</dbReference>
<dbReference type="SignaLink" id="A8MUV8"/>
<dbReference type="BioGRID-ORCS" id="442319">
    <property type="hits" value="8 hits in 1043 CRISPR screens"/>
</dbReference>
<dbReference type="ChiTaRS" id="ZNF727">
    <property type="organism name" value="human"/>
</dbReference>
<dbReference type="GenomeRNAi" id="442319"/>
<dbReference type="Pharos" id="A8MUV8">
    <property type="development level" value="Tdark"/>
</dbReference>
<dbReference type="PRO" id="PR:A8MUV8"/>
<dbReference type="Proteomes" id="UP000005640">
    <property type="component" value="Chromosome 7"/>
</dbReference>
<dbReference type="RNAct" id="A8MUV8">
    <property type="molecule type" value="protein"/>
</dbReference>
<dbReference type="Bgee" id="ENSG00000214652">
    <property type="expression patterns" value="Expressed in oviduct epithelium and 150 other cell types or tissues"/>
</dbReference>
<dbReference type="GO" id="GO:0005634">
    <property type="term" value="C:nucleus"/>
    <property type="evidence" value="ECO:0007669"/>
    <property type="project" value="UniProtKB-SubCell"/>
</dbReference>
<dbReference type="GO" id="GO:0000981">
    <property type="term" value="F:DNA-binding transcription factor activity, RNA polymerase II-specific"/>
    <property type="evidence" value="ECO:0000318"/>
    <property type="project" value="GO_Central"/>
</dbReference>
<dbReference type="GO" id="GO:0000978">
    <property type="term" value="F:RNA polymerase II cis-regulatory region sequence-specific DNA binding"/>
    <property type="evidence" value="ECO:0000318"/>
    <property type="project" value="GO_Central"/>
</dbReference>
<dbReference type="GO" id="GO:0008270">
    <property type="term" value="F:zinc ion binding"/>
    <property type="evidence" value="ECO:0007669"/>
    <property type="project" value="UniProtKB-KW"/>
</dbReference>
<dbReference type="GO" id="GO:0006355">
    <property type="term" value="P:regulation of DNA-templated transcription"/>
    <property type="evidence" value="ECO:0000318"/>
    <property type="project" value="GO_Central"/>
</dbReference>
<dbReference type="CDD" id="cd07765">
    <property type="entry name" value="KRAB_A-box"/>
    <property type="match status" value="1"/>
</dbReference>
<dbReference type="FunFam" id="3.30.160.60:FF:004137">
    <property type="match status" value="1"/>
</dbReference>
<dbReference type="FunFam" id="3.30.160.60:FF:001737">
    <property type="entry name" value="Zinc finger protein 100"/>
    <property type="match status" value="2"/>
</dbReference>
<dbReference type="FunFam" id="3.30.160.60:FF:000020">
    <property type="entry name" value="Zinc finger protein 14 homolog"/>
    <property type="match status" value="1"/>
</dbReference>
<dbReference type="FunFam" id="3.30.160.60:FF:000688">
    <property type="entry name" value="zinc finger protein 197 isoform X1"/>
    <property type="match status" value="1"/>
</dbReference>
<dbReference type="FunFam" id="3.30.160.60:FF:000034">
    <property type="entry name" value="zinc finger protein 25"/>
    <property type="match status" value="1"/>
</dbReference>
<dbReference type="FunFam" id="3.30.160.60:FF:002402">
    <property type="entry name" value="Zinc finger protein 347"/>
    <property type="match status" value="1"/>
</dbReference>
<dbReference type="FunFam" id="3.30.160.60:FF:000690">
    <property type="entry name" value="Zinc finger protein 354C"/>
    <property type="match status" value="1"/>
</dbReference>
<dbReference type="FunFam" id="3.30.160.60:FF:000023">
    <property type="entry name" value="zinc finger protein 37 homolog"/>
    <property type="match status" value="1"/>
</dbReference>
<dbReference type="FunFam" id="3.30.160.60:FF:001239">
    <property type="entry name" value="Zinc finger protein 615"/>
    <property type="match status" value="1"/>
</dbReference>
<dbReference type="FunFam" id="3.30.160.60:FF:002134">
    <property type="entry name" value="Zinc finger protein 616"/>
    <property type="match status" value="1"/>
</dbReference>
<dbReference type="Gene3D" id="6.10.140.140">
    <property type="match status" value="1"/>
</dbReference>
<dbReference type="Gene3D" id="3.30.160.60">
    <property type="entry name" value="Classic Zinc Finger"/>
    <property type="match status" value="11"/>
</dbReference>
<dbReference type="InterPro" id="IPR001909">
    <property type="entry name" value="KRAB"/>
</dbReference>
<dbReference type="InterPro" id="IPR036051">
    <property type="entry name" value="KRAB_dom_sf"/>
</dbReference>
<dbReference type="InterPro" id="IPR050527">
    <property type="entry name" value="Snail/Krueppel_Znf"/>
</dbReference>
<dbReference type="InterPro" id="IPR036236">
    <property type="entry name" value="Znf_C2H2_sf"/>
</dbReference>
<dbReference type="InterPro" id="IPR013087">
    <property type="entry name" value="Znf_C2H2_type"/>
</dbReference>
<dbReference type="PANTHER" id="PTHR24388:SF96">
    <property type="entry name" value="GENE, 32687-RELATED"/>
    <property type="match status" value="1"/>
</dbReference>
<dbReference type="PANTHER" id="PTHR24388">
    <property type="entry name" value="ZINC FINGER PROTEIN"/>
    <property type="match status" value="1"/>
</dbReference>
<dbReference type="Pfam" id="PF01352">
    <property type="entry name" value="KRAB"/>
    <property type="match status" value="1"/>
</dbReference>
<dbReference type="Pfam" id="PF00096">
    <property type="entry name" value="zf-C2H2"/>
    <property type="match status" value="6"/>
</dbReference>
<dbReference type="Pfam" id="PF13894">
    <property type="entry name" value="zf-C2H2_4"/>
    <property type="match status" value="1"/>
</dbReference>
<dbReference type="SMART" id="SM00349">
    <property type="entry name" value="KRAB"/>
    <property type="match status" value="1"/>
</dbReference>
<dbReference type="SMART" id="SM00355">
    <property type="entry name" value="ZnF_C2H2"/>
    <property type="match status" value="10"/>
</dbReference>
<dbReference type="SUPFAM" id="SSF57667">
    <property type="entry name" value="beta-beta-alpha zinc fingers"/>
    <property type="match status" value="7"/>
</dbReference>
<dbReference type="SUPFAM" id="SSF109640">
    <property type="entry name" value="KRAB domain (Kruppel-associated box)"/>
    <property type="match status" value="1"/>
</dbReference>
<dbReference type="PROSITE" id="PS50805">
    <property type="entry name" value="KRAB"/>
    <property type="match status" value="1"/>
</dbReference>
<dbReference type="PROSITE" id="PS00028">
    <property type="entry name" value="ZINC_FINGER_C2H2_1"/>
    <property type="match status" value="10"/>
</dbReference>
<dbReference type="PROSITE" id="PS50157">
    <property type="entry name" value="ZINC_FINGER_C2H2_2"/>
    <property type="match status" value="11"/>
</dbReference>